<protein>
    <recommendedName>
        <fullName evidence="1">DNA-directed RNA polymerase subunit beta'</fullName>
        <shortName evidence="1">RNAP subunit beta'</shortName>
        <ecNumber evidence="1">2.7.7.6</ecNumber>
    </recommendedName>
    <alternativeName>
        <fullName evidence="1">RNA polymerase subunit beta'</fullName>
    </alternativeName>
    <alternativeName>
        <fullName evidence="1">Transcriptase subunit beta'</fullName>
    </alternativeName>
</protein>
<organism>
    <name type="scientific">Chlamydia trachomatis serovar L2 (strain ATCC VR-902B / DSM 19102 / 434/Bu)</name>
    <dbReference type="NCBI Taxonomy" id="471472"/>
    <lineage>
        <taxon>Bacteria</taxon>
        <taxon>Pseudomonadati</taxon>
        <taxon>Chlamydiota</taxon>
        <taxon>Chlamydiia</taxon>
        <taxon>Chlamydiales</taxon>
        <taxon>Chlamydiaceae</taxon>
        <taxon>Chlamydia/Chlamydophila group</taxon>
        <taxon>Chlamydia</taxon>
    </lineage>
</organism>
<keyword id="KW-0240">DNA-directed RNA polymerase</keyword>
<keyword id="KW-0460">Magnesium</keyword>
<keyword id="KW-0479">Metal-binding</keyword>
<keyword id="KW-0548">Nucleotidyltransferase</keyword>
<keyword id="KW-0804">Transcription</keyword>
<keyword id="KW-0808">Transferase</keyword>
<keyword id="KW-0862">Zinc</keyword>
<proteinExistence type="inferred from homology"/>
<name>RPOC_CHLT2</name>
<comment type="function">
    <text evidence="1">DNA-dependent RNA polymerase catalyzes the transcription of DNA into RNA using the four ribonucleoside triphosphates as substrates.</text>
</comment>
<comment type="catalytic activity">
    <reaction evidence="1">
        <text>RNA(n) + a ribonucleoside 5'-triphosphate = RNA(n+1) + diphosphate</text>
        <dbReference type="Rhea" id="RHEA:21248"/>
        <dbReference type="Rhea" id="RHEA-COMP:14527"/>
        <dbReference type="Rhea" id="RHEA-COMP:17342"/>
        <dbReference type="ChEBI" id="CHEBI:33019"/>
        <dbReference type="ChEBI" id="CHEBI:61557"/>
        <dbReference type="ChEBI" id="CHEBI:140395"/>
        <dbReference type="EC" id="2.7.7.6"/>
    </reaction>
</comment>
<comment type="cofactor">
    <cofactor evidence="1">
        <name>Mg(2+)</name>
        <dbReference type="ChEBI" id="CHEBI:18420"/>
    </cofactor>
    <text evidence="1">Binds 1 Mg(2+) ion per subunit.</text>
</comment>
<comment type="cofactor">
    <cofactor evidence="1">
        <name>Zn(2+)</name>
        <dbReference type="ChEBI" id="CHEBI:29105"/>
    </cofactor>
    <text evidence="1">Binds 2 Zn(2+) ions per subunit.</text>
</comment>
<comment type="subunit">
    <text evidence="1">The RNAP catalytic core consists of 2 alpha, 1 beta, 1 beta' and 1 omega subunit. When a sigma factor is associated with the core the holoenzyme is formed, which can initiate transcription.</text>
</comment>
<comment type="similarity">
    <text evidence="1">Belongs to the RNA polymerase beta' chain family.</text>
</comment>
<evidence type="ECO:0000255" key="1">
    <source>
        <dbReference type="HAMAP-Rule" id="MF_01322"/>
    </source>
</evidence>
<accession>B0B7N0</accession>
<dbReference type="EC" id="2.7.7.6" evidence="1"/>
<dbReference type="EMBL" id="AM884176">
    <property type="protein sequence ID" value="CAP04006.1"/>
    <property type="molecule type" value="Genomic_DNA"/>
</dbReference>
<dbReference type="RefSeq" id="WP_009873719.1">
    <property type="nucleotide sequence ID" value="NC_010287.1"/>
</dbReference>
<dbReference type="RefSeq" id="YP_001654642.1">
    <property type="nucleotide sequence ID" value="NC_010287.1"/>
</dbReference>
<dbReference type="SMR" id="B0B7N0"/>
<dbReference type="KEGG" id="ctb:CTL0566"/>
<dbReference type="PATRIC" id="fig|471472.4.peg.607"/>
<dbReference type="HOGENOM" id="CLU_000524_3_1_0"/>
<dbReference type="Proteomes" id="UP001154402">
    <property type="component" value="Chromosome"/>
</dbReference>
<dbReference type="GO" id="GO:0000428">
    <property type="term" value="C:DNA-directed RNA polymerase complex"/>
    <property type="evidence" value="ECO:0007669"/>
    <property type="project" value="UniProtKB-KW"/>
</dbReference>
<dbReference type="GO" id="GO:0003677">
    <property type="term" value="F:DNA binding"/>
    <property type="evidence" value="ECO:0007669"/>
    <property type="project" value="UniProtKB-UniRule"/>
</dbReference>
<dbReference type="GO" id="GO:0003899">
    <property type="term" value="F:DNA-directed RNA polymerase activity"/>
    <property type="evidence" value="ECO:0007669"/>
    <property type="project" value="UniProtKB-UniRule"/>
</dbReference>
<dbReference type="GO" id="GO:0000287">
    <property type="term" value="F:magnesium ion binding"/>
    <property type="evidence" value="ECO:0007669"/>
    <property type="project" value="UniProtKB-UniRule"/>
</dbReference>
<dbReference type="GO" id="GO:0008270">
    <property type="term" value="F:zinc ion binding"/>
    <property type="evidence" value="ECO:0007669"/>
    <property type="project" value="UniProtKB-UniRule"/>
</dbReference>
<dbReference type="GO" id="GO:0006351">
    <property type="term" value="P:DNA-templated transcription"/>
    <property type="evidence" value="ECO:0007669"/>
    <property type="project" value="UniProtKB-UniRule"/>
</dbReference>
<dbReference type="CDD" id="cd02655">
    <property type="entry name" value="RNAP_beta'_C"/>
    <property type="match status" value="1"/>
</dbReference>
<dbReference type="CDD" id="cd01609">
    <property type="entry name" value="RNAP_beta'_N"/>
    <property type="match status" value="1"/>
</dbReference>
<dbReference type="Gene3D" id="1.10.132.30">
    <property type="match status" value="1"/>
</dbReference>
<dbReference type="Gene3D" id="1.10.150.390">
    <property type="match status" value="1"/>
</dbReference>
<dbReference type="Gene3D" id="1.10.1790.20">
    <property type="match status" value="1"/>
</dbReference>
<dbReference type="Gene3D" id="1.10.40.90">
    <property type="match status" value="1"/>
</dbReference>
<dbReference type="Gene3D" id="2.40.40.20">
    <property type="match status" value="1"/>
</dbReference>
<dbReference type="Gene3D" id="2.40.50.100">
    <property type="match status" value="3"/>
</dbReference>
<dbReference type="Gene3D" id="4.10.860.120">
    <property type="entry name" value="RNA polymerase II, clamp domain"/>
    <property type="match status" value="1"/>
</dbReference>
<dbReference type="Gene3D" id="1.10.274.100">
    <property type="entry name" value="RNA polymerase Rpb1, domain 3"/>
    <property type="match status" value="1"/>
</dbReference>
<dbReference type="HAMAP" id="MF_01322">
    <property type="entry name" value="RNApol_bact_RpoC"/>
    <property type="match status" value="1"/>
</dbReference>
<dbReference type="InterPro" id="IPR045867">
    <property type="entry name" value="DNA-dir_RpoC_beta_prime"/>
</dbReference>
<dbReference type="InterPro" id="IPR012754">
    <property type="entry name" value="DNA-dir_RpoC_beta_prime_bact"/>
</dbReference>
<dbReference type="InterPro" id="IPR000722">
    <property type="entry name" value="RNA_pol_asu"/>
</dbReference>
<dbReference type="InterPro" id="IPR006592">
    <property type="entry name" value="RNA_pol_N"/>
</dbReference>
<dbReference type="InterPro" id="IPR007080">
    <property type="entry name" value="RNA_pol_Rpb1_1"/>
</dbReference>
<dbReference type="InterPro" id="IPR007066">
    <property type="entry name" value="RNA_pol_Rpb1_3"/>
</dbReference>
<dbReference type="InterPro" id="IPR042102">
    <property type="entry name" value="RNA_pol_Rpb1_3_sf"/>
</dbReference>
<dbReference type="InterPro" id="IPR007083">
    <property type="entry name" value="RNA_pol_Rpb1_4"/>
</dbReference>
<dbReference type="InterPro" id="IPR007081">
    <property type="entry name" value="RNA_pol_Rpb1_5"/>
</dbReference>
<dbReference type="InterPro" id="IPR044893">
    <property type="entry name" value="RNA_pol_Rpb1_clamp_domain"/>
</dbReference>
<dbReference type="InterPro" id="IPR038120">
    <property type="entry name" value="Rpb1_funnel_sf"/>
</dbReference>
<dbReference type="NCBIfam" id="TIGR02386">
    <property type="entry name" value="rpoC_TIGR"/>
    <property type="match status" value="1"/>
</dbReference>
<dbReference type="PANTHER" id="PTHR19376">
    <property type="entry name" value="DNA-DIRECTED RNA POLYMERASE"/>
    <property type="match status" value="1"/>
</dbReference>
<dbReference type="PANTHER" id="PTHR19376:SF54">
    <property type="entry name" value="DNA-DIRECTED RNA POLYMERASE SUBUNIT BETA"/>
    <property type="match status" value="1"/>
</dbReference>
<dbReference type="Pfam" id="PF04997">
    <property type="entry name" value="RNA_pol_Rpb1_1"/>
    <property type="match status" value="1"/>
</dbReference>
<dbReference type="Pfam" id="PF00623">
    <property type="entry name" value="RNA_pol_Rpb1_2"/>
    <property type="match status" value="1"/>
</dbReference>
<dbReference type="Pfam" id="PF04983">
    <property type="entry name" value="RNA_pol_Rpb1_3"/>
    <property type="match status" value="1"/>
</dbReference>
<dbReference type="Pfam" id="PF05000">
    <property type="entry name" value="RNA_pol_Rpb1_4"/>
    <property type="match status" value="1"/>
</dbReference>
<dbReference type="Pfam" id="PF04998">
    <property type="entry name" value="RNA_pol_Rpb1_5"/>
    <property type="match status" value="1"/>
</dbReference>
<dbReference type="SMART" id="SM00663">
    <property type="entry name" value="RPOLA_N"/>
    <property type="match status" value="1"/>
</dbReference>
<dbReference type="SUPFAM" id="SSF64484">
    <property type="entry name" value="beta and beta-prime subunits of DNA dependent RNA-polymerase"/>
    <property type="match status" value="1"/>
</dbReference>
<feature type="chain" id="PRO_1000141764" description="DNA-directed RNA polymerase subunit beta'">
    <location>
        <begin position="1"/>
        <end position="1396"/>
    </location>
</feature>
<feature type="binding site" evidence="1">
    <location>
        <position position="72"/>
    </location>
    <ligand>
        <name>Zn(2+)</name>
        <dbReference type="ChEBI" id="CHEBI:29105"/>
        <label>1</label>
    </ligand>
</feature>
<feature type="binding site" evidence="1">
    <location>
        <position position="74"/>
    </location>
    <ligand>
        <name>Zn(2+)</name>
        <dbReference type="ChEBI" id="CHEBI:29105"/>
        <label>1</label>
    </ligand>
</feature>
<feature type="binding site" evidence="1">
    <location>
        <position position="87"/>
    </location>
    <ligand>
        <name>Zn(2+)</name>
        <dbReference type="ChEBI" id="CHEBI:29105"/>
        <label>1</label>
    </ligand>
</feature>
<feature type="binding site" evidence="1">
    <location>
        <position position="90"/>
    </location>
    <ligand>
        <name>Zn(2+)</name>
        <dbReference type="ChEBI" id="CHEBI:29105"/>
        <label>1</label>
    </ligand>
</feature>
<feature type="binding site" evidence="1">
    <location>
        <position position="463"/>
    </location>
    <ligand>
        <name>Mg(2+)</name>
        <dbReference type="ChEBI" id="CHEBI:18420"/>
    </ligand>
</feature>
<feature type="binding site" evidence="1">
    <location>
        <position position="465"/>
    </location>
    <ligand>
        <name>Mg(2+)</name>
        <dbReference type="ChEBI" id="CHEBI:18420"/>
    </ligand>
</feature>
<feature type="binding site" evidence="1">
    <location>
        <position position="467"/>
    </location>
    <ligand>
        <name>Mg(2+)</name>
        <dbReference type="ChEBI" id="CHEBI:18420"/>
    </ligand>
</feature>
<feature type="binding site" evidence="1">
    <location>
        <position position="814"/>
    </location>
    <ligand>
        <name>Zn(2+)</name>
        <dbReference type="ChEBI" id="CHEBI:29105"/>
        <label>2</label>
    </ligand>
</feature>
<feature type="binding site" evidence="1">
    <location>
        <position position="889"/>
    </location>
    <ligand>
        <name>Zn(2+)</name>
        <dbReference type="ChEBI" id="CHEBI:29105"/>
        <label>2</label>
    </ligand>
</feature>
<feature type="binding site" evidence="1">
    <location>
        <position position="896"/>
    </location>
    <ligand>
        <name>Zn(2+)</name>
        <dbReference type="ChEBI" id="CHEBI:29105"/>
        <label>2</label>
    </ligand>
</feature>
<feature type="binding site" evidence="1">
    <location>
        <position position="899"/>
    </location>
    <ligand>
        <name>Zn(2+)</name>
        <dbReference type="ChEBI" id="CHEBI:29105"/>
        <label>2</label>
    </ligand>
</feature>
<gene>
    <name evidence="1" type="primary">rpoC</name>
    <name type="ordered locus">CTL0566</name>
</gene>
<sequence>MFREGSRDDAALVKEGLFDKLEIGIASDVTIRDKWSCGEIKKPETINYRTFKPEKGGLFCEKIFGPTKDWECYCGKYKKIKHKGIVCDRCGVEVTLSKVRRERMAHIELAVPIVHIWFFKTTPSRIGNVLGMTASDLERVIYYEEYVVIDPGNTDLVKKQLLNDAKYREVVEKWGKDAFVAKMGGEAVYDLLKSEDLESLLGELKDRLRKTKSQQARMKLAKRLKIVEGFVSSSNRPEWMVLKNIPVVPPDLRPLVPLDGGRFATSDLNDLYRRVINRNNRLKAILRLKTPEVIVRNEKRMLQEAVDALFDNGRHGHPVMGAGNRPLKSLSEMLKGKNGRFRQNLLGKRVDYSGRSVIIVGPELKFNQCGLPKEMALELFEPFIIKRLKDQGSVYTIRSAKKMIQRGAPEVWDVLEEIIKGHPVLLNRAPTLHRLGIQAFEPVLIEGKAIRVHPLVCAAFNADFDGDQMAVHVPLSIEAQLEAKVLMMAPDNIFLPSSGKPVATPSKDMTLGIYYLMADPTYFPEEHGGKTKAFKDEVEVLRALNAGGFILKDEICGSRRDETGRGIHIHEKIKVRIDGQIIETTPGRVFFNTIVPKELGFQNYSMPSKRISELILQCYKKVGLEATVRFLDDLKELGFVQSTKAAISMGLKDVKIPEIKKEILKDAYDKVAIVKKQYEDGIITDGERHSKTISIWTEVSDLLSNALYSEIKKQTNSKHNPLFLMVDSGARGNKSQLKQLGALRGLMAKPNGAIIESPITSNFREGLTVLEYSISSHGARKGLADTALKTADSGYLTRRLVDVAQDVIITERDCGTLNHIEVSTIRQGSEELLPLKDRVYGRTVSENIYQPGDKSNVLAYAGDVLTSAQAEAIDDAGIESVKIRSTLTCESRRGVCAKCYGLNLANGHLIGLGEAVGIIAAQSIGEPGTQLTMRTFHLGGVAATSSTPEIVAECDGILVYLDLRVVVDQEGNNLVLNKMGALHLVQDEGRSLSEYKKLLSTKSIESLATFPVELGAKILVNDGAAVTAGQRIAEVELHNIPIICDKPGFVHYEDLVEGVSTEKVANKNTGLVELIVKQHRGELHPQIAIYADANMKELVGTYAIPSGAIISVEEGQRIAPGMLLARLPRGAIKTKDITGGLPRVAELVEARKPEDAADIAKIDGVVDFKGIQKNKRILVVRDEITGMEEEHLISLTKHLIVQRGDSVIKGQQLTDGLVVPHEILAICGVRELQKYLVNEVQEVYRLQGVDINDKHIEIIVRQMLQKVRITDPGDTTLLFGEDVDKKEFYEENRRTEEDGGKPAQAVPVLLGITKASLGTESFISAASFQDTTRVLTDAACSSKTDYLLGFKENVIMGHMIPGGTGFDTHKRIKQHLEKEQEDLVFDFDSEFESVAG</sequence>
<reference key="1">
    <citation type="journal article" date="2008" name="Genome Res.">
        <title>Chlamydia trachomatis: genome sequence analysis of lymphogranuloma venereum isolates.</title>
        <authorList>
            <person name="Thomson N.R."/>
            <person name="Holden M.T.G."/>
            <person name="Carder C."/>
            <person name="Lennard N."/>
            <person name="Lockey S.J."/>
            <person name="Marsh P."/>
            <person name="Skipp P."/>
            <person name="O'Connor C.D."/>
            <person name="Goodhead I."/>
            <person name="Norbertzcak H."/>
            <person name="Harris B."/>
            <person name="Ormond D."/>
            <person name="Rance R."/>
            <person name="Quail M.A."/>
            <person name="Parkhill J."/>
            <person name="Stephens R.S."/>
            <person name="Clarke I.N."/>
        </authorList>
    </citation>
    <scope>NUCLEOTIDE SEQUENCE [LARGE SCALE GENOMIC DNA]</scope>
    <source>
        <strain>ATCC VR-902B / DSM 19102 / 434/Bu</strain>
    </source>
</reference>